<dbReference type="EMBL" id="CP000360">
    <property type="protein sequence ID" value="ABF40997.1"/>
    <property type="molecule type" value="Genomic_DNA"/>
</dbReference>
<dbReference type="RefSeq" id="WP_011522798.1">
    <property type="nucleotide sequence ID" value="NC_008009.1"/>
</dbReference>
<dbReference type="SMR" id="Q1IQ53"/>
<dbReference type="STRING" id="204669.Acid345_1996"/>
<dbReference type="EnsemblBacteria" id="ABF40997">
    <property type="protein sequence ID" value="ABF40997"/>
    <property type="gene ID" value="Acid345_1996"/>
</dbReference>
<dbReference type="KEGG" id="aba:Acid345_1996"/>
<dbReference type="eggNOG" id="COG0691">
    <property type="taxonomic scope" value="Bacteria"/>
</dbReference>
<dbReference type="HOGENOM" id="CLU_108953_0_0_0"/>
<dbReference type="OrthoDB" id="9805462at2"/>
<dbReference type="Proteomes" id="UP000002432">
    <property type="component" value="Chromosome"/>
</dbReference>
<dbReference type="GO" id="GO:0005829">
    <property type="term" value="C:cytosol"/>
    <property type="evidence" value="ECO:0007669"/>
    <property type="project" value="TreeGrafter"/>
</dbReference>
<dbReference type="GO" id="GO:0003723">
    <property type="term" value="F:RNA binding"/>
    <property type="evidence" value="ECO:0007669"/>
    <property type="project" value="UniProtKB-UniRule"/>
</dbReference>
<dbReference type="GO" id="GO:0070929">
    <property type="term" value="P:trans-translation"/>
    <property type="evidence" value="ECO:0007669"/>
    <property type="project" value="UniProtKB-UniRule"/>
</dbReference>
<dbReference type="CDD" id="cd09294">
    <property type="entry name" value="SmpB"/>
    <property type="match status" value="1"/>
</dbReference>
<dbReference type="Gene3D" id="2.40.280.10">
    <property type="match status" value="1"/>
</dbReference>
<dbReference type="HAMAP" id="MF_00023">
    <property type="entry name" value="SmpB"/>
    <property type="match status" value="1"/>
</dbReference>
<dbReference type="InterPro" id="IPR023620">
    <property type="entry name" value="SmpB"/>
</dbReference>
<dbReference type="InterPro" id="IPR000037">
    <property type="entry name" value="SsrA-bd_prot"/>
</dbReference>
<dbReference type="InterPro" id="IPR020081">
    <property type="entry name" value="SsrA-bd_prot_CS"/>
</dbReference>
<dbReference type="NCBIfam" id="NF003843">
    <property type="entry name" value="PRK05422.1"/>
    <property type="match status" value="1"/>
</dbReference>
<dbReference type="NCBIfam" id="TIGR00086">
    <property type="entry name" value="smpB"/>
    <property type="match status" value="1"/>
</dbReference>
<dbReference type="PANTHER" id="PTHR30308:SF2">
    <property type="entry name" value="SSRA-BINDING PROTEIN"/>
    <property type="match status" value="1"/>
</dbReference>
<dbReference type="PANTHER" id="PTHR30308">
    <property type="entry name" value="TMRNA-BINDING COMPONENT OF TRANS-TRANSLATION TAGGING COMPLEX"/>
    <property type="match status" value="1"/>
</dbReference>
<dbReference type="Pfam" id="PF01668">
    <property type="entry name" value="SmpB"/>
    <property type="match status" value="1"/>
</dbReference>
<dbReference type="SUPFAM" id="SSF74982">
    <property type="entry name" value="Small protein B (SmpB)"/>
    <property type="match status" value="1"/>
</dbReference>
<dbReference type="PROSITE" id="PS01317">
    <property type="entry name" value="SSRP"/>
    <property type="match status" value="1"/>
</dbReference>
<protein>
    <recommendedName>
        <fullName evidence="1">SsrA-binding protein</fullName>
    </recommendedName>
    <alternativeName>
        <fullName evidence="1">Small protein B</fullName>
    </alternativeName>
</protein>
<evidence type="ECO:0000255" key="1">
    <source>
        <dbReference type="HAMAP-Rule" id="MF_00023"/>
    </source>
</evidence>
<evidence type="ECO:0000256" key="2">
    <source>
        <dbReference type="SAM" id="MobiDB-lite"/>
    </source>
</evidence>
<accession>Q1IQ53</accession>
<proteinExistence type="inferred from homology"/>
<gene>
    <name evidence="1" type="primary">smpB</name>
    <name type="ordered locus">Acid345_1996</name>
</gene>
<sequence length="175" mass="19847">MTRNPQPDRSKTAPKNAKRDPVASGERDASVNRAASHNYFLLDKYEAGVALRGTEVKSIRDGRANLKDAYGLVKENELWLINAHIGPYDAASYNNHAPLRTRKLLVKKREILKLLAASQQKGHTLIPTRMYFKNGRVKVELAVAKGKQLWDKRETDRRKTADRDAREAIARSRKS</sequence>
<keyword id="KW-0963">Cytoplasm</keyword>
<keyword id="KW-1185">Reference proteome</keyword>
<keyword id="KW-0694">RNA-binding</keyword>
<organism>
    <name type="scientific">Koribacter versatilis (strain Ellin345)</name>
    <dbReference type="NCBI Taxonomy" id="204669"/>
    <lineage>
        <taxon>Bacteria</taxon>
        <taxon>Pseudomonadati</taxon>
        <taxon>Acidobacteriota</taxon>
        <taxon>Terriglobia</taxon>
        <taxon>Terriglobales</taxon>
        <taxon>Candidatus Korobacteraceae</taxon>
        <taxon>Candidatus Korobacter</taxon>
    </lineage>
</organism>
<reference key="1">
    <citation type="journal article" date="2009" name="Appl. Environ. Microbiol.">
        <title>Three genomes from the phylum Acidobacteria provide insight into the lifestyles of these microorganisms in soils.</title>
        <authorList>
            <person name="Ward N.L."/>
            <person name="Challacombe J.F."/>
            <person name="Janssen P.H."/>
            <person name="Henrissat B."/>
            <person name="Coutinho P.M."/>
            <person name="Wu M."/>
            <person name="Xie G."/>
            <person name="Haft D.H."/>
            <person name="Sait M."/>
            <person name="Badger J."/>
            <person name="Barabote R.D."/>
            <person name="Bradley B."/>
            <person name="Brettin T.S."/>
            <person name="Brinkac L.M."/>
            <person name="Bruce D."/>
            <person name="Creasy T."/>
            <person name="Daugherty S.C."/>
            <person name="Davidsen T.M."/>
            <person name="DeBoy R.T."/>
            <person name="Detter J.C."/>
            <person name="Dodson R.J."/>
            <person name="Durkin A.S."/>
            <person name="Ganapathy A."/>
            <person name="Gwinn-Giglio M."/>
            <person name="Han C.S."/>
            <person name="Khouri H."/>
            <person name="Kiss H."/>
            <person name="Kothari S.P."/>
            <person name="Madupu R."/>
            <person name="Nelson K.E."/>
            <person name="Nelson W.C."/>
            <person name="Paulsen I."/>
            <person name="Penn K."/>
            <person name="Ren Q."/>
            <person name="Rosovitz M.J."/>
            <person name="Selengut J.D."/>
            <person name="Shrivastava S."/>
            <person name="Sullivan S.A."/>
            <person name="Tapia R."/>
            <person name="Thompson L.S."/>
            <person name="Watkins K.L."/>
            <person name="Yang Q."/>
            <person name="Yu C."/>
            <person name="Zafar N."/>
            <person name="Zhou L."/>
            <person name="Kuske C.R."/>
        </authorList>
    </citation>
    <scope>NUCLEOTIDE SEQUENCE [LARGE SCALE GENOMIC DNA]</scope>
    <source>
        <strain>Ellin345</strain>
    </source>
</reference>
<comment type="function">
    <text evidence="1">Required for rescue of stalled ribosomes mediated by trans-translation. Binds to transfer-messenger RNA (tmRNA), required for stable association of tmRNA with ribosomes. tmRNA and SmpB together mimic tRNA shape, replacing the anticodon stem-loop with SmpB. tmRNA is encoded by the ssrA gene; the 2 termini fold to resemble tRNA(Ala) and it encodes a 'tag peptide', a short internal open reading frame. During trans-translation Ala-aminoacylated tmRNA acts like a tRNA, entering the A-site of stalled ribosomes, displacing the stalled mRNA. The ribosome then switches to translate the ORF on the tmRNA; the nascent peptide is terminated with the 'tag peptide' encoded by the tmRNA and targeted for degradation. The ribosome is freed to recommence translation, which seems to be the essential function of trans-translation.</text>
</comment>
<comment type="subcellular location">
    <subcellularLocation>
        <location evidence="1">Cytoplasm</location>
    </subcellularLocation>
    <text evidence="1">The tmRNA-SmpB complex associates with stalled 70S ribosomes.</text>
</comment>
<comment type="similarity">
    <text evidence="1">Belongs to the SmpB family.</text>
</comment>
<name>SSRP_KORVE</name>
<feature type="chain" id="PRO_0000331014" description="SsrA-binding protein">
    <location>
        <begin position="1"/>
        <end position="175"/>
    </location>
</feature>
<feature type="region of interest" description="Disordered" evidence="2">
    <location>
        <begin position="1"/>
        <end position="29"/>
    </location>
</feature>
<feature type="region of interest" description="Disordered" evidence="2">
    <location>
        <begin position="152"/>
        <end position="175"/>
    </location>
</feature>